<evidence type="ECO:0000255" key="1">
    <source>
        <dbReference type="HAMAP-Rule" id="MF_01316"/>
    </source>
</evidence>
<protein>
    <recommendedName>
        <fullName evidence="1">Photosystem II reaction center protein I</fullName>
        <shortName evidence="1">PSII-I</shortName>
    </recommendedName>
    <alternativeName>
        <fullName evidence="1">PSII 4.8 kDa protein</fullName>
    </alternativeName>
</protein>
<feature type="chain" id="PRO_0000353219" description="Photosystem II reaction center protein I">
    <location>
        <begin position="1"/>
        <end position="36"/>
    </location>
</feature>
<feature type="transmembrane region" description="Helical" evidence="1">
    <location>
        <begin position="4"/>
        <end position="24"/>
    </location>
</feature>
<gene>
    <name evidence="1" type="primary">psbI</name>
</gene>
<proteinExistence type="inferred from homology"/>
<sequence>MLTLKLFVYTVVIFFVSLFIFGFLSNDPGRNPGREE</sequence>
<dbReference type="EMBL" id="EF380351">
    <property type="protein sequence ID" value="ABQ45233.1"/>
    <property type="molecule type" value="Genomic_DNA"/>
</dbReference>
<dbReference type="RefSeq" id="YP_001294168.1">
    <property type="nucleotide sequence ID" value="NC_009599.1"/>
</dbReference>
<dbReference type="SMR" id="A6MM20"/>
<dbReference type="GeneID" id="5236843"/>
<dbReference type="GO" id="GO:0009535">
    <property type="term" value="C:chloroplast thylakoid membrane"/>
    <property type="evidence" value="ECO:0007669"/>
    <property type="project" value="UniProtKB-SubCell"/>
</dbReference>
<dbReference type="GO" id="GO:0009539">
    <property type="term" value="C:photosystem II reaction center"/>
    <property type="evidence" value="ECO:0007669"/>
    <property type="project" value="InterPro"/>
</dbReference>
<dbReference type="GO" id="GO:0015979">
    <property type="term" value="P:photosynthesis"/>
    <property type="evidence" value="ECO:0007669"/>
    <property type="project" value="UniProtKB-UniRule"/>
</dbReference>
<dbReference type="HAMAP" id="MF_01316">
    <property type="entry name" value="PSII_PsbI"/>
    <property type="match status" value="1"/>
</dbReference>
<dbReference type="InterPro" id="IPR003686">
    <property type="entry name" value="PSII_PsbI"/>
</dbReference>
<dbReference type="InterPro" id="IPR037271">
    <property type="entry name" value="PSII_PsbI_sf"/>
</dbReference>
<dbReference type="NCBIfam" id="NF002735">
    <property type="entry name" value="PRK02655.1"/>
    <property type="match status" value="1"/>
</dbReference>
<dbReference type="PANTHER" id="PTHR35772">
    <property type="entry name" value="PHOTOSYSTEM II REACTION CENTER PROTEIN I"/>
    <property type="match status" value="1"/>
</dbReference>
<dbReference type="PANTHER" id="PTHR35772:SF1">
    <property type="entry name" value="PHOTOSYSTEM II REACTION CENTER PROTEIN I"/>
    <property type="match status" value="1"/>
</dbReference>
<dbReference type="Pfam" id="PF02532">
    <property type="entry name" value="PsbI"/>
    <property type="match status" value="1"/>
</dbReference>
<dbReference type="SUPFAM" id="SSF161041">
    <property type="entry name" value="Photosystem II reaction center protein I, PsbI"/>
    <property type="match status" value="1"/>
</dbReference>
<organism>
    <name type="scientific">Buxus microphylla</name>
    <name type="common">Littleleaf boxwood</name>
    <name type="synonym">Japanese boxwood</name>
    <dbReference type="NCBI Taxonomy" id="153571"/>
    <lineage>
        <taxon>Eukaryota</taxon>
        <taxon>Viridiplantae</taxon>
        <taxon>Streptophyta</taxon>
        <taxon>Embryophyta</taxon>
        <taxon>Tracheophyta</taxon>
        <taxon>Spermatophyta</taxon>
        <taxon>Magnoliopsida</taxon>
        <taxon>Buxales</taxon>
        <taxon>Buxaceae</taxon>
        <taxon>Buxus</taxon>
    </lineage>
</organism>
<reference key="1">
    <citation type="journal article" date="2007" name="Mol. Phylogenet. Evol.">
        <title>Phylogenetic and evolutionary implications of complete chloroplast genome sequences of four early-diverging angiosperms: Buxus (Buxaceae), Chloranthus (Chloranthaceae), Dioscorea (Dioscoreaceae), and Illicium (Schisandraceae).</title>
        <authorList>
            <person name="Hansen D.R."/>
            <person name="Dastidar S.G."/>
            <person name="Cai Z."/>
            <person name="Penaflor C."/>
            <person name="Kuehl J.V."/>
            <person name="Boore J.L."/>
            <person name="Jansen R.K."/>
        </authorList>
    </citation>
    <scope>NUCLEOTIDE SEQUENCE [LARGE SCALE GENOMIC DNA]</scope>
</reference>
<accession>A6MM20</accession>
<keyword id="KW-0150">Chloroplast</keyword>
<keyword id="KW-0472">Membrane</keyword>
<keyword id="KW-0602">Photosynthesis</keyword>
<keyword id="KW-0604">Photosystem II</keyword>
<keyword id="KW-0934">Plastid</keyword>
<keyword id="KW-0674">Reaction center</keyword>
<keyword id="KW-0793">Thylakoid</keyword>
<keyword id="KW-0812">Transmembrane</keyword>
<keyword id="KW-1133">Transmembrane helix</keyword>
<name>PSBI_BUXMI</name>
<geneLocation type="chloroplast"/>
<comment type="function">
    <text evidence="1">One of the components of the core complex of photosystem II (PSII), required for its stability and/or assembly. PSII is a light-driven water:plastoquinone oxidoreductase that uses light energy to abstract electrons from H(2)O, generating O(2) and a proton gradient subsequently used for ATP formation. It consists of a core antenna complex that captures photons, and an electron transfer chain that converts photonic excitation into a charge separation.</text>
</comment>
<comment type="subunit">
    <text evidence="1">PSII is composed of 1 copy each of membrane proteins PsbA, PsbB, PsbC, PsbD, PsbE, PsbF, PsbH, PsbI, PsbJ, PsbK, PsbL, PsbM, PsbT, PsbX, PsbY, PsbZ, Psb30/Ycf12, at least 3 peripheral proteins of the oxygen-evolving complex and a large number of cofactors. It forms dimeric complexes.</text>
</comment>
<comment type="subcellular location">
    <subcellularLocation>
        <location evidence="1">Plastid</location>
        <location evidence="1">Chloroplast thylakoid membrane</location>
        <topology evidence="1">Single-pass membrane protein</topology>
    </subcellularLocation>
</comment>
<comment type="similarity">
    <text evidence="1">Belongs to the PsbI family.</text>
</comment>